<name>RL16_DESAP</name>
<protein>
    <recommendedName>
        <fullName evidence="1">Large ribosomal subunit protein uL16</fullName>
    </recommendedName>
    <alternativeName>
        <fullName evidence="3">50S ribosomal protein L16</fullName>
    </alternativeName>
</protein>
<feature type="chain" id="PRO_1000142960" description="Large ribosomal subunit protein uL16">
    <location>
        <begin position="1"/>
        <end position="143"/>
    </location>
</feature>
<feature type="region of interest" description="Disordered" evidence="2">
    <location>
        <begin position="1"/>
        <end position="23"/>
    </location>
</feature>
<feature type="compositionally biased region" description="Basic residues" evidence="2">
    <location>
        <begin position="1"/>
        <end position="14"/>
    </location>
</feature>
<organism>
    <name type="scientific">Desulforudis audaxviator (strain MP104C)</name>
    <dbReference type="NCBI Taxonomy" id="477974"/>
    <lineage>
        <taxon>Bacteria</taxon>
        <taxon>Bacillati</taxon>
        <taxon>Bacillota</taxon>
        <taxon>Clostridia</taxon>
        <taxon>Thermoanaerobacterales</taxon>
        <taxon>Candidatus Desulforudaceae</taxon>
        <taxon>Candidatus Desulforudis</taxon>
    </lineage>
</organism>
<proteinExistence type="inferred from homology"/>
<evidence type="ECO:0000255" key="1">
    <source>
        <dbReference type="HAMAP-Rule" id="MF_01342"/>
    </source>
</evidence>
<evidence type="ECO:0000256" key="2">
    <source>
        <dbReference type="SAM" id="MobiDB-lite"/>
    </source>
</evidence>
<evidence type="ECO:0000305" key="3"/>
<accession>B1I1J5</accession>
<sequence length="143" mass="16005">MLTPKRVKWRRQHRPDRAGKAKGGTKIQFGDLALQSLDVAWISSRQIEAARIAMTRHVKRGGKVWIRIFPDRPITAKPAETRMGSGKGSPEYWVAVVKPGRIMFEIAGVPEETAREALRLASHKLPCRTKIVKRQEVGEAGEG</sequence>
<gene>
    <name evidence="1" type="primary">rplP</name>
    <name type="ordered locus">Daud_0232</name>
</gene>
<reference key="1">
    <citation type="submission" date="2007-10" db="EMBL/GenBank/DDBJ databases">
        <title>Complete sequence of chromosome of Desulforudis audaxviator MP104C.</title>
        <authorList>
            <person name="Copeland A."/>
            <person name="Lucas S."/>
            <person name="Lapidus A."/>
            <person name="Barry K."/>
            <person name="Glavina del Rio T."/>
            <person name="Dalin E."/>
            <person name="Tice H."/>
            <person name="Bruce D."/>
            <person name="Pitluck S."/>
            <person name="Lowry S.R."/>
            <person name="Larimer F."/>
            <person name="Land M.L."/>
            <person name="Hauser L."/>
            <person name="Kyrpides N."/>
            <person name="Ivanova N.N."/>
            <person name="Richardson P."/>
        </authorList>
    </citation>
    <scope>NUCLEOTIDE SEQUENCE [LARGE SCALE GENOMIC DNA]</scope>
    <source>
        <strain>MP104C</strain>
    </source>
</reference>
<comment type="function">
    <text evidence="1">Binds 23S rRNA and is also seen to make contacts with the A and possibly P site tRNAs.</text>
</comment>
<comment type="subunit">
    <text evidence="1">Part of the 50S ribosomal subunit.</text>
</comment>
<comment type="similarity">
    <text evidence="1">Belongs to the universal ribosomal protein uL16 family.</text>
</comment>
<keyword id="KW-1185">Reference proteome</keyword>
<keyword id="KW-0687">Ribonucleoprotein</keyword>
<keyword id="KW-0689">Ribosomal protein</keyword>
<keyword id="KW-0694">RNA-binding</keyword>
<keyword id="KW-0699">rRNA-binding</keyword>
<keyword id="KW-0820">tRNA-binding</keyword>
<dbReference type="EMBL" id="CP000860">
    <property type="protein sequence ID" value="ACA58793.1"/>
    <property type="molecule type" value="Genomic_DNA"/>
</dbReference>
<dbReference type="RefSeq" id="WP_012301385.1">
    <property type="nucleotide sequence ID" value="NC_010424.1"/>
</dbReference>
<dbReference type="SMR" id="B1I1J5"/>
<dbReference type="STRING" id="477974.Daud_0232"/>
<dbReference type="KEGG" id="dau:Daud_0232"/>
<dbReference type="eggNOG" id="COG0197">
    <property type="taxonomic scope" value="Bacteria"/>
</dbReference>
<dbReference type="HOGENOM" id="CLU_078858_2_1_9"/>
<dbReference type="OrthoDB" id="9802589at2"/>
<dbReference type="Proteomes" id="UP000008544">
    <property type="component" value="Chromosome"/>
</dbReference>
<dbReference type="GO" id="GO:0022625">
    <property type="term" value="C:cytosolic large ribosomal subunit"/>
    <property type="evidence" value="ECO:0007669"/>
    <property type="project" value="TreeGrafter"/>
</dbReference>
<dbReference type="GO" id="GO:0019843">
    <property type="term" value="F:rRNA binding"/>
    <property type="evidence" value="ECO:0007669"/>
    <property type="project" value="UniProtKB-UniRule"/>
</dbReference>
<dbReference type="GO" id="GO:0003735">
    <property type="term" value="F:structural constituent of ribosome"/>
    <property type="evidence" value="ECO:0007669"/>
    <property type="project" value="InterPro"/>
</dbReference>
<dbReference type="GO" id="GO:0000049">
    <property type="term" value="F:tRNA binding"/>
    <property type="evidence" value="ECO:0007669"/>
    <property type="project" value="UniProtKB-KW"/>
</dbReference>
<dbReference type="GO" id="GO:0006412">
    <property type="term" value="P:translation"/>
    <property type="evidence" value="ECO:0007669"/>
    <property type="project" value="UniProtKB-UniRule"/>
</dbReference>
<dbReference type="CDD" id="cd01433">
    <property type="entry name" value="Ribosomal_L16_L10e"/>
    <property type="match status" value="1"/>
</dbReference>
<dbReference type="FunFam" id="3.90.1170.10:FF:000001">
    <property type="entry name" value="50S ribosomal protein L16"/>
    <property type="match status" value="1"/>
</dbReference>
<dbReference type="Gene3D" id="3.90.1170.10">
    <property type="entry name" value="Ribosomal protein L10e/L16"/>
    <property type="match status" value="1"/>
</dbReference>
<dbReference type="HAMAP" id="MF_01342">
    <property type="entry name" value="Ribosomal_uL16"/>
    <property type="match status" value="1"/>
</dbReference>
<dbReference type="InterPro" id="IPR047873">
    <property type="entry name" value="Ribosomal_uL16"/>
</dbReference>
<dbReference type="InterPro" id="IPR000114">
    <property type="entry name" value="Ribosomal_uL16_bact-type"/>
</dbReference>
<dbReference type="InterPro" id="IPR020798">
    <property type="entry name" value="Ribosomal_uL16_CS"/>
</dbReference>
<dbReference type="InterPro" id="IPR016180">
    <property type="entry name" value="Ribosomal_uL16_dom"/>
</dbReference>
<dbReference type="InterPro" id="IPR036920">
    <property type="entry name" value="Ribosomal_uL16_sf"/>
</dbReference>
<dbReference type="NCBIfam" id="TIGR01164">
    <property type="entry name" value="rplP_bact"/>
    <property type="match status" value="1"/>
</dbReference>
<dbReference type="PANTHER" id="PTHR12220">
    <property type="entry name" value="50S/60S RIBOSOMAL PROTEIN L16"/>
    <property type="match status" value="1"/>
</dbReference>
<dbReference type="PANTHER" id="PTHR12220:SF13">
    <property type="entry name" value="LARGE RIBOSOMAL SUBUNIT PROTEIN UL16M"/>
    <property type="match status" value="1"/>
</dbReference>
<dbReference type="Pfam" id="PF00252">
    <property type="entry name" value="Ribosomal_L16"/>
    <property type="match status" value="1"/>
</dbReference>
<dbReference type="PRINTS" id="PR00060">
    <property type="entry name" value="RIBOSOMALL16"/>
</dbReference>
<dbReference type="SUPFAM" id="SSF54686">
    <property type="entry name" value="Ribosomal protein L16p/L10e"/>
    <property type="match status" value="1"/>
</dbReference>
<dbReference type="PROSITE" id="PS00586">
    <property type="entry name" value="RIBOSOMAL_L16_1"/>
    <property type="match status" value="1"/>
</dbReference>
<dbReference type="PROSITE" id="PS00701">
    <property type="entry name" value="RIBOSOMAL_L16_2"/>
    <property type="match status" value="1"/>
</dbReference>